<protein>
    <recommendedName>
        <fullName evidence="1">Endoribonuclease YbeY</fullName>
        <ecNumber evidence="1">3.1.-.-</ecNumber>
    </recommendedName>
</protein>
<reference key="1">
    <citation type="journal article" date="1998" name="Nature">
        <title>The complete genome of the hyperthermophilic bacterium Aquifex aeolicus.</title>
        <authorList>
            <person name="Deckert G."/>
            <person name="Warren P.V."/>
            <person name="Gaasterland T."/>
            <person name="Young W.G."/>
            <person name="Lenox A.L."/>
            <person name="Graham D.E."/>
            <person name="Overbeek R."/>
            <person name="Snead M.A."/>
            <person name="Keller M."/>
            <person name="Aujay M."/>
            <person name="Huber R."/>
            <person name="Feldman R.A."/>
            <person name="Short J.M."/>
            <person name="Olsen G.J."/>
            <person name="Swanson R.V."/>
        </authorList>
    </citation>
    <scope>NUCLEOTIDE SEQUENCE [LARGE SCALE GENOMIC DNA]</scope>
    <source>
        <strain>VF5</strain>
    </source>
</reference>
<reference key="2">
    <citation type="journal article" date="2003" name="Acta Crystallogr. D">
        <title>Structure of the hypothetical protein AQ_1354 from Aquifex aeolicus.</title>
        <authorList>
            <person name="Oganesyan V."/>
            <person name="Busso D."/>
            <person name="Brandsen J."/>
            <person name="Chen S."/>
            <person name="Jancarik J."/>
            <person name="Kim R."/>
            <person name="Kim S.-H."/>
        </authorList>
    </citation>
    <scope>X-RAY CRYSTALLOGRAPHY (1.89 ANGSTROMS)</scope>
</reference>
<comment type="function">
    <text evidence="1">Single strand-specific metallo-endoribonuclease involved in late-stage 70S ribosome quality control and in maturation of the 3' terminus of the 16S rRNA.</text>
</comment>
<comment type="cofactor">
    <cofactor evidence="1">
        <name>Zn(2+)</name>
        <dbReference type="ChEBI" id="CHEBI:29105"/>
    </cofactor>
    <text evidence="1">Binds 1 zinc ion.</text>
</comment>
<comment type="subcellular location">
    <subcellularLocation>
        <location evidence="1">Cytoplasm</location>
    </subcellularLocation>
</comment>
<comment type="similarity">
    <text evidence="1">Belongs to the endoribonuclease YbeY family.</text>
</comment>
<sequence>MSSTKRQKNRVLVKLKKRKVRKDKIEKWAELALSALGLNNVELSVYITDDQEIRELNKTYRKKDKPTDVLSFPMGEEFGGYKILGDVVISQDTAERQARELGHSLEEEVKRLIVHGIVHLLGYDHEKGGEEEKKFRELENYVLSKLSKAL</sequence>
<proteinExistence type="evidence at protein level"/>
<gene>
    <name evidence="1" type="primary">ybeY</name>
    <name type="ordered locus">aq_1354</name>
</gene>
<evidence type="ECO:0000255" key="1">
    <source>
        <dbReference type="HAMAP-Rule" id="MF_00009"/>
    </source>
</evidence>
<evidence type="ECO:0007829" key="2">
    <source>
        <dbReference type="PDB" id="1OZ9"/>
    </source>
</evidence>
<accession>O67367</accession>
<name>YBEY_AQUAE</name>
<organism>
    <name type="scientific">Aquifex aeolicus (strain VF5)</name>
    <dbReference type="NCBI Taxonomy" id="224324"/>
    <lineage>
        <taxon>Bacteria</taxon>
        <taxon>Pseudomonadati</taxon>
        <taxon>Aquificota</taxon>
        <taxon>Aquificia</taxon>
        <taxon>Aquificales</taxon>
        <taxon>Aquificaceae</taxon>
        <taxon>Aquifex</taxon>
    </lineage>
</organism>
<dbReference type="EC" id="3.1.-.-" evidence="1"/>
<dbReference type="EMBL" id="AE000657">
    <property type="protein sequence ID" value="AAC07338.1"/>
    <property type="molecule type" value="Genomic_DNA"/>
</dbReference>
<dbReference type="PIR" id="D70417">
    <property type="entry name" value="D70417"/>
</dbReference>
<dbReference type="RefSeq" id="NP_213931.1">
    <property type="nucleotide sequence ID" value="NC_000918.1"/>
</dbReference>
<dbReference type="RefSeq" id="WP_010880869.1">
    <property type="nucleotide sequence ID" value="NC_000918.1"/>
</dbReference>
<dbReference type="PDB" id="1OZ9">
    <property type="method" value="X-ray"/>
    <property type="resolution" value="1.89 A"/>
    <property type="chains" value="A=1-150"/>
</dbReference>
<dbReference type="PDBsum" id="1OZ9"/>
<dbReference type="SMR" id="O67367"/>
<dbReference type="FunCoup" id="O67367">
    <property type="interactions" value="217"/>
</dbReference>
<dbReference type="STRING" id="224324.aq_1354"/>
<dbReference type="EnsemblBacteria" id="AAC07338">
    <property type="protein sequence ID" value="AAC07338"/>
    <property type="gene ID" value="aq_1354"/>
</dbReference>
<dbReference type="KEGG" id="aae:aq_1354"/>
<dbReference type="PATRIC" id="fig|224324.8.peg.1058"/>
<dbReference type="eggNOG" id="COG0319">
    <property type="taxonomic scope" value="Bacteria"/>
</dbReference>
<dbReference type="HOGENOM" id="CLU_106710_3_3_0"/>
<dbReference type="InParanoid" id="O67367"/>
<dbReference type="OrthoDB" id="9807740at2"/>
<dbReference type="EvolutionaryTrace" id="O67367"/>
<dbReference type="Proteomes" id="UP000000798">
    <property type="component" value="Chromosome"/>
</dbReference>
<dbReference type="GO" id="GO:0005737">
    <property type="term" value="C:cytoplasm"/>
    <property type="evidence" value="ECO:0007669"/>
    <property type="project" value="UniProtKB-SubCell"/>
</dbReference>
<dbReference type="GO" id="GO:0004222">
    <property type="term" value="F:metalloendopeptidase activity"/>
    <property type="evidence" value="ECO:0007669"/>
    <property type="project" value="InterPro"/>
</dbReference>
<dbReference type="GO" id="GO:0004521">
    <property type="term" value="F:RNA endonuclease activity"/>
    <property type="evidence" value="ECO:0007669"/>
    <property type="project" value="UniProtKB-UniRule"/>
</dbReference>
<dbReference type="GO" id="GO:0008270">
    <property type="term" value="F:zinc ion binding"/>
    <property type="evidence" value="ECO:0007669"/>
    <property type="project" value="UniProtKB-UniRule"/>
</dbReference>
<dbReference type="GO" id="GO:0006364">
    <property type="term" value="P:rRNA processing"/>
    <property type="evidence" value="ECO:0007669"/>
    <property type="project" value="UniProtKB-UniRule"/>
</dbReference>
<dbReference type="Gene3D" id="3.40.390.30">
    <property type="entry name" value="Metalloproteases ('zincins'), catalytic domain"/>
    <property type="match status" value="1"/>
</dbReference>
<dbReference type="HAMAP" id="MF_00009">
    <property type="entry name" value="Endoribonucl_YbeY"/>
    <property type="match status" value="1"/>
</dbReference>
<dbReference type="InterPro" id="IPR023091">
    <property type="entry name" value="MetalPrtase_cat_dom_sf_prd"/>
</dbReference>
<dbReference type="InterPro" id="IPR002036">
    <property type="entry name" value="YbeY"/>
</dbReference>
<dbReference type="InterPro" id="IPR020549">
    <property type="entry name" value="YbeY_CS"/>
</dbReference>
<dbReference type="NCBIfam" id="TIGR00043">
    <property type="entry name" value="rRNA maturation RNase YbeY"/>
    <property type="match status" value="1"/>
</dbReference>
<dbReference type="PANTHER" id="PTHR46986">
    <property type="entry name" value="ENDORIBONUCLEASE YBEY, CHLOROPLASTIC"/>
    <property type="match status" value="1"/>
</dbReference>
<dbReference type="PANTHER" id="PTHR46986:SF1">
    <property type="entry name" value="ENDORIBONUCLEASE YBEY, CHLOROPLASTIC"/>
    <property type="match status" value="1"/>
</dbReference>
<dbReference type="Pfam" id="PF02130">
    <property type="entry name" value="YbeY"/>
    <property type="match status" value="1"/>
</dbReference>
<dbReference type="SUPFAM" id="SSF55486">
    <property type="entry name" value="Metalloproteases ('zincins'), catalytic domain"/>
    <property type="match status" value="1"/>
</dbReference>
<dbReference type="PROSITE" id="PS01306">
    <property type="entry name" value="UPF0054"/>
    <property type="match status" value="1"/>
</dbReference>
<feature type="chain" id="PRO_0000102400" description="Endoribonuclease YbeY">
    <location>
        <begin position="1"/>
        <end position="150"/>
    </location>
</feature>
<feature type="binding site" evidence="1">
    <location>
        <position position="115"/>
    </location>
    <ligand>
        <name>Zn(2+)</name>
        <dbReference type="ChEBI" id="CHEBI:29105"/>
        <note>catalytic</note>
    </ligand>
</feature>
<feature type="binding site" evidence="1">
    <location>
        <position position="119"/>
    </location>
    <ligand>
        <name>Zn(2+)</name>
        <dbReference type="ChEBI" id="CHEBI:29105"/>
        <note>catalytic</note>
    </ligand>
</feature>
<feature type="binding site" evidence="1">
    <location>
        <position position="125"/>
    </location>
    <ligand>
        <name>Zn(2+)</name>
        <dbReference type="ChEBI" id="CHEBI:29105"/>
        <note>catalytic</note>
    </ligand>
</feature>
<feature type="strand" evidence="2">
    <location>
        <begin position="10"/>
        <end position="17"/>
    </location>
</feature>
<feature type="helix" evidence="2">
    <location>
        <begin position="22"/>
        <end position="35"/>
    </location>
</feature>
<feature type="strand" evidence="2">
    <location>
        <begin position="40"/>
        <end position="48"/>
    </location>
</feature>
<feature type="helix" evidence="2">
    <location>
        <begin position="50"/>
        <end position="61"/>
    </location>
</feature>
<feature type="strand" evidence="2">
    <location>
        <begin position="68"/>
        <end position="73"/>
    </location>
</feature>
<feature type="strand" evidence="2">
    <location>
        <begin position="81"/>
        <end position="90"/>
    </location>
</feature>
<feature type="helix" evidence="2">
    <location>
        <begin position="91"/>
        <end position="101"/>
    </location>
</feature>
<feature type="helix" evidence="2">
    <location>
        <begin position="105"/>
        <end position="120"/>
    </location>
</feature>
<feature type="helix" evidence="2">
    <location>
        <begin position="129"/>
        <end position="147"/>
    </location>
</feature>
<keyword id="KW-0002">3D-structure</keyword>
<keyword id="KW-0963">Cytoplasm</keyword>
<keyword id="KW-0255">Endonuclease</keyword>
<keyword id="KW-0378">Hydrolase</keyword>
<keyword id="KW-0479">Metal-binding</keyword>
<keyword id="KW-0540">Nuclease</keyword>
<keyword id="KW-1185">Reference proteome</keyword>
<keyword id="KW-0690">Ribosome biogenesis</keyword>
<keyword id="KW-0698">rRNA processing</keyword>
<keyword id="KW-0862">Zinc</keyword>